<sequence length="175" mass="20247">MERLPYEIVSTIFRKAILHYVLIRGTTYPQSLAENLNISKGLASSFLRLCSALNIMKRERAGHKVLYSFTSKGLAILKRLAPEIFDLSFSSVFEQLPKKKIATKYYPVDKIGFEISWKEDKLGGIVFSFFDSNGEHLGDVFRSNKGYWWCVICQSDTCKHIDYLKRLYKTLKNQD</sequence>
<evidence type="ECO:0000255" key="1"/>
<organism>
    <name type="scientific">Methanocaldococcus jannaschii (strain ATCC 43067 / DSM 2661 / JAL-1 / JCM 10045 / NBRC 100440)</name>
    <name type="common">Methanococcus jannaschii</name>
    <dbReference type="NCBI Taxonomy" id="243232"/>
    <lineage>
        <taxon>Archaea</taxon>
        <taxon>Methanobacteriati</taxon>
        <taxon>Methanobacteriota</taxon>
        <taxon>Methanomada group</taxon>
        <taxon>Methanococci</taxon>
        <taxon>Methanococcales</taxon>
        <taxon>Methanocaldococcaceae</taxon>
        <taxon>Methanocaldococcus</taxon>
    </lineage>
</organism>
<gene>
    <name type="ordered locus">MJ0773</name>
</gene>
<protein>
    <recommendedName>
        <fullName>Uncharacterized protein MJ0773</fullName>
    </recommendedName>
</protein>
<reference key="1">
    <citation type="journal article" date="1996" name="Science">
        <title>Complete genome sequence of the methanogenic archaeon, Methanococcus jannaschii.</title>
        <authorList>
            <person name="Bult C.J."/>
            <person name="White O."/>
            <person name="Olsen G.J."/>
            <person name="Zhou L."/>
            <person name="Fleischmann R.D."/>
            <person name="Sutton G.G."/>
            <person name="Blake J.A."/>
            <person name="FitzGerald L.M."/>
            <person name="Clayton R.A."/>
            <person name="Gocayne J.D."/>
            <person name="Kerlavage A.R."/>
            <person name="Dougherty B.A."/>
            <person name="Tomb J.-F."/>
            <person name="Adams M.D."/>
            <person name="Reich C.I."/>
            <person name="Overbeek R."/>
            <person name="Kirkness E.F."/>
            <person name="Weinstock K.G."/>
            <person name="Merrick J.M."/>
            <person name="Glodek A."/>
            <person name="Scott J.L."/>
            <person name="Geoghagen N.S.M."/>
            <person name="Weidman J.F."/>
            <person name="Fuhrmann J.L."/>
            <person name="Nguyen D."/>
            <person name="Utterback T.R."/>
            <person name="Kelley J.M."/>
            <person name="Peterson J.D."/>
            <person name="Sadow P.W."/>
            <person name="Hanna M.C."/>
            <person name="Cotton M.D."/>
            <person name="Roberts K.M."/>
            <person name="Hurst M.A."/>
            <person name="Kaine B.P."/>
            <person name="Borodovsky M."/>
            <person name="Klenk H.-P."/>
            <person name="Fraser C.M."/>
            <person name="Smith H.O."/>
            <person name="Woese C.R."/>
            <person name="Venter J.C."/>
        </authorList>
    </citation>
    <scope>NUCLEOTIDE SEQUENCE [LARGE SCALE GENOMIC DNA]</scope>
    <source>
        <strain>ATCC 43067 / DSM 2661 / JAL-1 / JCM 10045 / NBRC 100440</strain>
    </source>
</reference>
<keyword id="KW-1185">Reference proteome</keyword>
<keyword id="KW-0732">Signal</keyword>
<feature type="signal peptide" evidence="1">
    <location>
        <begin position="1"/>
        <end position="33"/>
    </location>
</feature>
<feature type="chain" id="PRO_0000013997" description="Uncharacterized protein MJ0773">
    <location>
        <begin position="34"/>
        <end position="175"/>
    </location>
</feature>
<name>Y773_METJA</name>
<proteinExistence type="inferred from homology"/>
<dbReference type="EMBL" id="L77117">
    <property type="protein sequence ID" value="AAB98777.1"/>
    <property type="molecule type" value="Genomic_DNA"/>
</dbReference>
<dbReference type="PIR" id="E64396">
    <property type="entry name" value="E64396"/>
</dbReference>
<dbReference type="RefSeq" id="WP_010870278.1">
    <property type="nucleotide sequence ID" value="NC_000909.1"/>
</dbReference>
<dbReference type="SMR" id="Q58183"/>
<dbReference type="FunCoup" id="Q58183">
    <property type="interactions" value="5"/>
</dbReference>
<dbReference type="PaxDb" id="243232-MJ_0773"/>
<dbReference type="EnsemblBacteria" id="AAB98777">
    <property type="protein sequence ID" value="AAB98777"/>
    <property type="gene ID" value="MJ_0773"/>
</dbReference>
<dbReference type="GeneID" id="1451650"/>
<dbReference type="KEGG" id="mja:MJ_0773"/>
<dbReference type="eggNOG" id="arCOG05050">
    <property type="taxonomic scope" value="Archaea"/>
</dbReference>
<dbReference type="HOGENOM" id="CLU_1551839_0_0_2"/>
<dbReference type="InParanoid" id="Q58183"/>
<dbReference type="OrthoDB" id="60268at2157"/>
<dbReference type="Proteomes" id="UP000000805">
    <property type="component" value="Chromosome"/>
</dbReference>
<dbReference type="Gene3D" id="1.10.10.10">
    <property type="entry name" value="Winged helix-like DNA-binding domain superfamily/Winged helix DNA-binding domain"/>
    <property type="match status" value="1"/>
</dbReference>
<dbReference type="InterPro" id="IPR036388">
    <property type="entry name" value="WH-like_DNA-bd_sf"/>
</dbReference>
<dbReference type="InterPro" id="IPR036390">
    <property type="entry name" value="WH_DNA-bd_sf"/>
</dbReference>
<dbReference type="SUPFAM" id="SSF46785">
    <property type="entry name" value="Winged helix' DNA-binding domain"/>
    <property type="match status" value="1"/>
</dbReference>
<accession>Q58183</accession>